<sequence>MGKVIGIDLGTTNSCVAVMEGKEPKVIENAEGERTTPSIIAFANGEKLVGQSAKRQAVTNPRNTIYAVKRLIGRNFIDPMVRKDQGIVPYNIVKADNGDAWVEADNNKYSPSQISAFILQKMKETAENYLGDKVTQAVITVPAYFNDAQRQATKDAGKIAGLEVLRIINEPTAAALAYGFEKSASKTIAVYDLGGGTFDVSILEISDGVFEVKSTNGDTFLGGEDFDTRILNHLIDVFKKENGIDLSKDPLALQRLKEAAEKAKKELSSAVTTDINLPYITADSSGPKHLNIKFTRAELEKLVDDLIEKTIEPCRKALQDAGFKASDIQEVVLVGGMTRMPKVQEAVKKFFGREPHKGVNPDEVVALGAAIQGGVLNKEVTDILLLDVTPLSLGIETLGGVFTRLIDRNTTIPTKKSQVFSTADDNQHAVTIRVFQGEREMAKDNKLLGQFNLEGIPPAPRGLPQIEVTFDIDANGIVHVSAKDKASGKEQKVTIQASGGLSDAEIEQMVKDAEQNADEDKKRKELIEAKNAADSLVYSTEKTLTEYGDKLSSDDKGAVEEALAALKAVLESEDTALIKEKTASLTAASMKIGEAMYKAQSESQPAAENATNDEKIVDADFQDVEKK</sequence>
<name>DNAK_RICRO</name>
<feature type="chain" id="PRO_1000079239" description="Chaperone protein DnaK">
    <location>
        <begin position="1"/>
        <end position="627"/>
    </location>
</feature>
<feature type="region of interest" description="Disordered" evidence="2">
    <location>
        <begin position="598"/>
        <end position="627"/>
    </location>
</feature>
<feature type="compositionally biased region" description="Polar residues" evidence="2">
    <location>
        <begin position="600"/>
        <end position="610"/>
    </location>
</feature>
<feature type="compositionally biased region" description="Basic and acidic residues" evidence="2">
    <location>
        <begin position="612"/>
        <end position="627"/>
    </location>
</feature>
<feature type="modified residue" description="Phosphothreonine; by autocatalysis" evidence="1">
    <location>
        <position position="197"/>
    </location>
</feature>
<keyword id="KW-0067">ATP-binding</keyword>
<keyword id="KW-0143">Chaperone</keyword>
<keyword id="KW-0547">Nucleotide-binding</keyword>
<keyword id="KW-0597">Phosphoprotein</keyword>
<keyword id="KW-0346">Stress response</keyword>
<reference key="1">
    <citation type="journal article" date="2008" name="Infect. Immun.">
        <title>Genomic comparison of virulent Rickettsia rickettsii Sheila Smith and avirulent Rickettsia rickettsii Iowa.</title>
        <authorList>
            <person name="Ellison D.W."/>
            <person name="Clark T.R."/>
            <person name="Sturdevant D.E."/>
            <person name="Virtaneva K."/>
            <person name="Porcella S.F."/>
            <person name="Hackstadt T."/>
        </authorList>
    </citation>
    <scope>NUCLEOTIDE SEQUENCE [LARGE SCALE GENOMIC DNA]</scope>
    <source>
        <strain>Iowa</strain>
    </source>
</reference>
<comment type="function">
    <text evidence="1">Acts as a chaperone.</text>
</comment>
<comment type="induction">
    <text evidence="1">By stress conditions e.g. heat shock.</text>
</comment>
<comment type="similarity">
    <text evidence="1">Belongs to the heat shock protein 70 family.</text>
</comment>
<gene>
    <name evidence="1" type="primary">dnaK</name>
    <name type="ordered locus">RrIowa_0288</name>
</gene>
<dbReference type="EMBL" id="CP000766">
    <property type="protein sequence ID" value="ABY72197.1"/>
    <property type="molecule type" value="Genomic_DNA"/>
</dbReference>
<dbReference type="RefSeq" id="WP_012150452.1">
    <property type="nucleotide sequence ID" value="NC_010263.3"/>
</dbReference>
<dbReference type="SMR" id="B0BWH1"/>
<dbReference type="GeneID" id="79937024"/>
<dbReference type="KEGG" id="rrj:RrIowa_0288"/>
<dbReference type="eggNOG" id="COG0443">
    <property type="taxonomic scope" value="Bacteria"/>
</dbReference>
<dbReference type="HOGENOM" id="CLU_005965_2_1_5"/>
<dbReference type="Proteomes" id="UP000000796">
    <property type="component" value="Chromosome"/>
</dbReference>
<dbReference type="GO" id="GO:0005524">
    <property type="term" value="F:ATP binding"/>
    <property type="evidence" value="ECO:0007669"/>
    <property type="project" value="UniProtKB-UniRule"/>
</dbReference>
<dbReference type="GO" id="GO:0140662">
    <property type="term" value="F:ATP-dependent protein folding chaperone"/>
    <property type="evidence" value="ECO:0007669"/>
    <property type="project" value="InterPro"/>
</dbReference>
<dbReference type="GO" id="GO:0051082">
    <property type="term" value="F:unfolded protein binding"/>
    <property type="evidence" value="ECO:0007669"/>
    <property type="project" value="InterPro"/>
</dbReference>
<dbReference type="CDD" id="cd11733">
    <property type="entry name" value="ASKHA_NBD_HSP70_HSPA9"/>
    <property type="match status" value="1"/>
</dbReference>
<dbReference type="FunFam" id="2.60.34.10:FF:000014">
    <property type="entry name" value="Chaperone protein DnaK HSP70"/>
    <property type="match status" value="1"/>
</dbReference>
<dbReference type="FunFam" id="3.30.420.40:FF:000020">
    <property type="entry name" value="Chaperone protein HscA homolog"/>
    <property type="match status" value="1"/>
</dbReference>
<dbReference type="FunFam" id="1.20.1270.10:FF:000001">
    <property type="entry name" value="Molecular chaperone DnaK"/>
    <property type="match status" value="1"/>
</dbReference>
<dbReference type="FunFam" id="3.30.420.40:FF:000004">
    <property type="entry name" value="Molecular chaperone DnaK"/>
    <property type="match status" value="1"/>
</dbReference>
<dbReference type="FunFam" id="3.90.640.10:FF:000003">
    <property type="entry name" value="Molecular chaperone DnaK"/>
    <property type="match status" value="1"/>
</dbReference>
<dbReference type="Gene3D" id="1.20.1270.10">
    <property type="match status" value="1"/>
</dbReference>
<dbReference type="Gene3D" id="3.30.420.40">
    <property type="match status" value="2"/>
</dbReference>
<dbReference type="Gene3D" id="3.90.640.10">
    <property type="entry name" value="Actin, Chain A, domain 4"/>
    <property type="match status" value="1"/>
</dbReference>
<dbReference type="Gene3D" id="2.60.34.10">
    <property type="entry name" value="Substrate Binding Domain Of DNAk, Chain A, domain 1"/>
    <property type="match status" value="1"/>
</dbReference>
<dbReference type="HAMAP" id="MF_00332">
    <property type="entry name" value="DnaK"/>
    <property type="match status" value="1"/>
</dbReference>
<dbReference type="InterPro" id="IPR043129">
    <property type="entry name" value="ATPase_NBD"/>
</dbReference>
<dbReference type="InterPro" id="IPR012725">
    <property type="entry name" value="Chaperone_DnaK"/>
</dbReference>
<dbReference type="InterPro" id="IPR018181">
    <property type="entry name" value="Heat_shock_70_CS"/>
</dbReference>
<dbReference type="InterPro" id="IPR029048">
    <property type="entry name" value="HSP70_C_sf"/>
</dbReference>
<dbReference type="InterPro" id="IPR029047">
    <property type="entry name" value="HSP70_peptide-bd_sf"/>
</dbReference>
<dbReference type="InterPro" id="IPR013126">
    <property type="entry name" value="Hsp_70_fam"/>
</dbReference>
<dbReference type="NCBIfam" id="NF001413">
    <property type="entry name" value="PRK00290.1"/>
    <property type="match status" value="1"/>
</dbReference>
<dbReference type="NCBIfam" id="NF003520">
    <property type="entry name" value="PRK05183.1"/>
    <property type="match status" value="1"/>
</dbReference>
<dbReference type="NCBIfam" id="TIGR02350">
    <property type="entry name" value="prok_dnaK"/>
    <property type="match status" value="1"/>
</dbReference>
<dbReference type="PANTHER" id="PTHR19375">
    <property type="entry name" value="HEAT SHOCK PROTEIN 70KDA"/>
    <property type="match status" value="1"/>
</dbReference>
<dbReference type="Pfam" id="PF00012">
    <property type="entry name" value="HSP70"/>
    <property type="match status" value="1"/>
</dbReference>
<dbReference type="PRINTS" id="PR00301">
    <property type="entry name" value="HEATSHOCK70"/>
</dbReference>
<dbReference type="SUPFAM" id="SSF53067">
    <property type="entry name" value="Actin-like ATPase domain"/>
    <property type="match status" value="2"/>
</dbReference>
<dbReference type="SUPFAM" id="SSF100934">
    <property type="entry name" value="Heat shock protein 70kD (HSP70), C-terminal subdomain"/>
    <property type="match status" value="1"/>
</dbReference>
<dbReference type="SUPFAM" id="SSF100920">
    <property type="entry name" value="Heat shock protein 70kD (HSP70), peptide-binding domain"/>
    <property type="match status" value="1"/>
</dbReference>
<dbReference type="PROSITE" id="PS00297">
    <property type="entry name" value="HSP70_1"/>
    <property type="match status" value="1"/>
</dbReference>
<dbReference type="PROSITE" id="PS00329">
    <property type="entry name" value="HSP70_2"/>
    <property type="match status" value="1"/>
</dbReference>
<dbReference type="PROSITE" id="PS01036">
    <property type="entry name" value="HSP70_3"/>
    <property type="match status" value="1"/>
</dbReference>
<organism>
    <name type="scientific">Rickettsia rickettsii (strain Iowa)</name>
    <dbReference type="NCBI Taxonomy" id="452659"/>
    <lineage>
        <taxon>Bacteria</taxon>
        <taxon>Pseudomonadati</taxon>
        <taxon>Pseudomonadota</taxon>
        <taxon>Alphaproteobacteria</taxon>
        <taxon>Rickettsiales</taxon>
        <taxon>Rickettsiaceae</taxon>
        <taxon>Rickettsieae</taxon>
        <taxon>Rickettsia</taxon>
        <taxon>spotted fever group</taxon>
    </lineage>
</organism>
<proteinExistence type="inferred from homology"/>
<evidence type="ECO:0000255" key="1">
    <source>
        <dbReference type="HAMAP-Rule" id="MF_00332"/>
    </source>
</evidence>
<evidence type="ECO:0000256" key="2">
    <source>
        <dbReference type="SAM" id="MobiDB-lite"/>
    </source>
</evidence>
<protein>
    <recommendedName>
        <fullName evidence="1">Chaperone protein DnaK</fullName>
    </recommendedName>
    <alternativeName>
        <fullName evidence="1">HSP70</fullName>
    </alternativeName>
    <alternativeName>
        <fullName evidence="1">Heat shock 70 kDa protein</fullName>
    </alternativeName>
    <alternativeName>
        <fullName evidence="1">Heat shock protein 70</fullName>
    </alternativeName>
</protein>
<accession>B0BWH1</accession>